<name>SYI_NEIMB</name>
<reference key="1">
    <citation type="journal article" date="2000" name="Science">
        <title>Complete genome sequence of Neisseria meningitidis serogroup B strain MC58.</title>
        <authorList>
            <person name="Tettelin H."/>
            <person name="Saunders N.J."/>
            <person name="Heidelberg J.F."/>
            <person name="Jeffries A.C."/>
            <person name="Nelson K.E."/>
            <person name="Eisen J.A."/>
            <person name="Ketchum K.A."/>
            <person name="Hood D.W."/>
            <person name="Peden J.F."/>
            <person name="Dodson R.J."/>
            <person name="Nelson W.C."/>
            <person name="Gwinn M.L."/>
            <person name="DeBoy R.T."/>
            <person name="Peterson J.D."/>
            <person name="Hickey E.K."/>
            <person name="Haft D.H."/>
            <person name="Salzberg S.L."/>
            <person name="White O."/>
            <person name="Fleischmann R.D."/>
            <person name="Dougherty B.A."/>
            <person name="Mason T.M."/>
            <person name="Ciecko A."/>
            <person name="Parksey D.S."/>
            <person name="Blair E."/>
            <person name="Cittone H."/>
            <person name="Clark E.B."/>
            <person name="Cotton M.D."/>
            <person name="Utterback T.R."/>
            <person name="Khouri H.M."/>
            <person name="Qin H."/>
            <person name="Vamathevan J.J."/>
            <person name="Gill J."/>
            <person name="Scarlato V."/>
            <person name="Masignani V."/>
            <person name="Pizza M."/>
            <person name="Grandi G."/>
            <person name="Sun L."/>
            <person name="Smith H.O."/>
            <person name="Fraser C.M."/>
            <person name="Moxon E.R."/>
            <person name="Rappuoli R."/>
            <person name="Venter J.C."/>
        </authorList>
    </citation>
    <scope>NUCLEOTIDE SEQUENCE [LARGE SCALE GENOMIC DNA]</scope>
    <source>
        <strain>ATCC BAA-335 / MC58</strain>
    </source>
</reference>
<protein>
    <recommendedName>
        <fullName evidence="1">Isoleucine--tRNA ligase</fullName>
        <ecNumber evidence="1">6.1.1.5</ecNumber>
    </recommendedName>
    <alternativeName>
        <fullName evidence="1">Isoleucyl-tRNA synthetase</fullName>
        <shortName evidence="1">IleRS</shortName>
    </alternativeName>
</protein>
<evidence type="ECO:0000255" key="1">
    <source>
        <dbReference type="HAMAP-Rule" id="MF_02002"/>
    </source>
</evidence>
<proteinExistence type="inferred from homology"/>
<dbReference type="EC" id="6.1.1.5" evidence="1"/>
<dbReference type="EMBL" id="AE002098">
    <property type="protein sequence ID" value="AAF42168.1"/>
    <property type="molecule type" value="Genomic_DNA"/>
</dbReference>
<dbReference type="PIR" id="G81036">
    <property type="entry name" value="G81036"/>
</dbReference>
<dbReference type="RefSeq" id="NP_274830.1">
    <property type="nucleotide sequence ID" value="NC_003112.2"/>
</dbReference>
<dbReference type="RefSeq" id="WP_002225664.1">
    <property type="nucleotide sequence ID" value="NC_003112.2"/>
</dbReference>
<dbReference type="SMR" id="Q9JXY7"/>
<dbReference type="FunCoup" id="Q9JXY7">
    <property type="interactions" value="479"/>
</dbReference>
<dbReference type="STRING" id="122586.NMB1833"/>
<dbReference type="PaxDb" id="122586-NMB1833"/>
<dbReference type="KEGG" id="nme:NMB1833"/>
<dbReference type="PATRIC" id="fig|122586.8.peg.2339"/>
<dbReference type="HOGENOM" id="CLU_001493_7_1_4"/>
<dbReference type="InParanoid" id="Q9JXY7"/>
<dbReference type="OrthoDB" id="9810365at2"/>
<dbReference type="Proteomes" id="UP000000425">
    <property type="component" value="Chromosome"/>
</dbReference>
<dbReference type="GO" id="GO:0005829">
    <property type="term" value="C:cytosol"/>
    <property type="evidence" value="ECO:0000318"/>
    <property type="project" value="GO_Central"/>
</dbReference>
<dbReference type="GO" id="GO:0002161">
    <property type="term" value="F:aminoacyl-tRNA deacylase activity"/>
    <property type="evidence" value="ECO:0007669"/>
    <property type="project" value="InterPro"/>
</dbReference>
<dbReference type="GO" id="GO:0005524">
    <property type="term" value="F:ATP binding"/>
    <property type="evidence" value="ECO:0007669"/>
    <property type="project" value="UniProtKB-UniRule"/>
</dbReference>
<dbReference type="GO" id="GO:0004822">
    <property type="term" value="F:isoleucine-tRNA ligase activity"/>
    <property type="evidence" value="ECO:0000318"/>
    <property type="project" value="GO_Central"/>
</dbReference>
<dbReference type="GO" id="GO:0000049">
    <property type="term" value="F:tRNA binding"/>
    <property type="evidence" value="ECO:0007669"/>
    <property type="project" value="InterPro"/>
</dbReference>
<dbReference type="GO" id="GO:0008270">
    <property type="term" value="F:zinc ion binding"/>
    <property type="evidence" value="ECO:0007669"/>
    <property type="project" value="UniProtKB-UniRule"/>
</dbReference>
<dbReference type="GO" id="GO:0006428">
    <property type="term" value="P:isoleucyl-tRNA aminoacylation"/>
    <property type="evidence" value="ECO:0000318"/>
    <property type="project" value="GO_Central"/>
</dbReference>
<dbReference type="CDD" id="cd07960">
    <property type="entry name" value="Anticodon_Ia_Ile_BEm"/>
    <property type="match status" value="1"/>
</dbReference>
<dbReference type="FunFam" id="3.40.50.620:FF:000042">
    <property type="entry name" value="Isoleucine--tRNA ligase"/>
    <property type="match status" value="1"/>
</dbReference>
<dbReference type="FunFam" id="3.40.50.620:FF:000048">
    <property type="entry name" value="Isoleucine--tRNA ligase"/>
    <property type="match status" value="1"/>
</dbReference>
<dbReference type="FunFam" id="3.90.740.10:FF:000022">
    <property type="entry name" value="Isoleucine--tRNA ligase"/>
    <property type="match status" value="1"/>
</dbReference>
<dbReference type="Gene3D" id="1.10.730.20">
    <property type="match status" value="1"/>
</dbReference>
<dbReference type="Gene3D" id="3.40.50.620">
    <property type="entry name" value="HUPs"/>
    <property type="match status" value="2"/>
</dbReference>
<dbReference type="Gene3D" id="3.90.740.10">
    <property type="entry name" value="Valyl/Leucyl/Isoleucyl-tRNA synthetase, editing domain"/>
    <property type="match status" value="1"/>
</dbReference>
<dbReference type="HAMAP" id="MF_02002">
    <property type="entry name" value="Ile_tRNA_synth_type1"/>
    <property type="match status" value="1"/>
</dbReference>
<dbReference type="InterPro" id="IPR001412">
    <property type="entry name" value="aa-tRNA-synth_I_CS"/>
</dbReference>
<dbReference type="InterPro" id="IPR002300">
    <property type="entry name" value="aa-tRNA-synth_Ia"/>
</dbReference>
<dbReference type="InterPro" id="IPR033708">
    <property type="entry name" value="Anticodon_Ile_BEm"/>
</dbReference>
<dbReference type="InterPro" id="IPR002301">
    <property type="entry name" value="Ile-tRNA-ligase"/>
</dbReference>
<dbReference type="InterPro" id="IPR023585">
    <property type="entry name" value="Ile-tRNA-ligase_type1"/>
</dbReference>
<dbReference type="InterPro" id="IPR050081">
    <property type="entry name" value="Ile-tRNA_ligase"/>
</dbReference>
<dbReference type="InterPro" id="IPR013155">
    <property type="entry name" value="M/V/L/I-tRNA-synth_anticd-bd"/>
</dbReference>
<dbReference type="InterPro" id="IPR014729">
    <property type="entry name" value="Rossmann-like_a/b/a_fold"/>
</dbReference>
<dbReference type="InterPro" id="IPR009080">
    <property type="entry name" value="tRNAsynth_Ia_anticodon-bd"/>
</dbReference>
<dbReference type="InterPro" id="IPR009008">
    <property type="entry name" value="Val/Leu/Ile-tRNA-synth_edit"/>
</dbReference>
<dbReference type="InterPro" id="IPR010663">
    <property type="entry name" value="Znf_FPG/IleRS"/>
</dbReference>
<dbReference type="NCBIfam" id="TIGR00392">
    <property type="entry name" value="ileS"/>
    <property type="match status" value="1"/>
</dbReference>
<dbReference type="PANTHER" id="PTHR42765:SF1">
    <property type="entry name" value="ISOLEUCINE--TRNA LIGASE, MITOCHONDRIAL"/>
    <property type="match status" value="1"/>
</dbReference>
<dbReference type="PANTHER" id="PTHR42765">
    <property type="entry name" value="SOLEUCYL-TRNA SYNTHETASE"/>
    <property type="match status" value="1"/>
</dbReference>
<dbReference type="Pfam" id="PF08264">
    <property type="entry name" value="Anticodon_1"/>
    <property type="match status" value="1"/>
</dbReference>
<dbReference type="Pfam" id="PF00133">
    <property type="entry name" value="tRNA-synt_1"/>
    <property type="match status" value="1"/>
</dbReference>
<dbReference type="Pfam" id="PF06827">
    <property type="entry name" value="zf-FPG_IleRS"/>
    <property type="match status" value="1"/>
</dbReference>
<dbReference type="PRINTS" id="PR00984">
    <property type="entry name" value="TRNASYNTHILE"/>
</dbReference>
<dbReference type="SUPFAM" id="SSF47323">
    <property type="entry name" value="Anticodon-binding domain of a subclass of class I aminoacyl-tRNA synthetases"/>
    <property type="match status" value="1"/>
</dbReference>
<dbReference type="SUPFAM" id="SSF52374">
    <property type="entry name" value="Nucleotidylyl transferase"/>
    <property type="match status" value="1"/>
</dbReference>
<dbReference type="SUPFAM" id="SSF50677">
    <property type="entry name" value="ValRS/IleRS/LeuRS editing domain"/>
    <property type="match status" value="1"/>
</dbReference>
<dbReference type="PROSITE" id="PS00178">
    <property type="entry name" value="AA_TRNA_LIGASE_I"/>
    <property type="match status" value="1"/>
</dbReference>
<gene>
    <name evidence="1" type="primary">ileS</name>
    <name type="ordered locus">NMB1833</name>
</gene>
<sequence>MTDYSKTVNLLESPFPMRGNLAKREPAWLKSWYEQKRYQKLREIAKGRPKFILHDGPPYANGDIHIGHAVNKILKDIIIRSKTQAGFDAPYVPGWDCHGLPIEVMVEKLHGKDMPKARFRELCREYAAEQIARQKKDFIRLGVLGDWDHPYLTMDFKTEADTVRMLGEIYKSGYLYRGAKPVQFCLDCGSSLAEAEVEYKDKISPAIDVAYLFKDTAALAAAFGLAGFEGKAFAVIWTTTPWTLPASQAVSAGADVVYQLIDTPKGKLVLAKDLAEDALKRYGFSDGIAILAETTGDKLENLHMNHPFLERDIPMLNGEHVTTDAGTGLVHTAPAHGLEDYAVCNKYGIELYNPVNAEGRYIGETPRVAGMRVWEANPVILQWLEETGNLLASSKIEHSYAHCWRHKTPLIYRATGQWFVGMDKAGADGKTLRDKAIKAVDDTEFFPSWGRARLEAMIEGRPDWVVSRQRYWGTPMTFFVHKETGELHPNSAELLEKVALKIEEKGIEAWFSLDKSELLSAEDCENYDKLSDTMDVWFDSGSTHYSVVKQREELEWPADLYLEGSDQHRGWFQSSMLTGCASSMGRAPYKQLLTHGFVVDGEGKKMSKSIGNVVAPQEVYNEFGADILRLWAASTDYSGELAISKEILKRVTESYRRIRNTLSFLFANLSDFNPIEDAVQQADMVEIDRYAVVLARQLQECLAGDYYPRYAFHFAVKDIVSFCSEDLGAFYLDILKDRLYTTKADSHARRSAQTALYHITRSLVLLIAPILCFTGEEAWDIIGGGEEDSVLFHTWHEFPTINEKTEAELVKKWTAIREAREAVTAAIEPLRADKTVGSSLQAEAEITAPEEMAGYLNALGEELRFALLVSKAEVKVGSELAVAAKASDGEKCERCWHYTRDVGAVAGYETVCKRCAENVGGEGETRHYA</sequence>
<keyword id="KW-0030">Aminoacyl-tRNA synthetase</keyword>
<keyword id="KW-0067">ATP-binding</keyword>
<keyword id="KW-0963">Cytoplasm</keyword>
<keyword id="KW-0436">Ligase</keyword>
<keyword id="KW-0479">Metal-binding</keyword>
<keyword id="KW-0547">Nucleotide-binding</keyword>
<keyword id="KW-0648">Protein biosynthesis</keyword>
<keyword id="KW-1185">Reference proteome</keyword>
<keyword id="KW-0862">Zinc</keyword>
<organism>
    <name type="scientific">Neisseria meningitidis serogroup B (strain ATCC BAA-335 / MC58)</name>
    <dbReference type="NCBI Taxonomy" id="122586"/>
    <lineage>
        <taxon>Bacteria</taxon>
        <taxon>Pseudomonadati</taxon>
        <taxon>Pseudomonadota</taxon>
        <taxon>Betaproteobacteria</taxon>
        <taxon>Neisseriales</taxon>
        <taxon>Neisseriaceae</taxon>
        <taxon>Neisseria</taxon>
    </lineage>
</organism>
<feature type="chain" id="PRO_0000098429" description="Isoleucine--tRNA ligase">
    <location>
        <begin position="1"/>
        <end position="929"/>
    </location>
</feature>
<feature type="short sequence motif" description="'HIGH' region">
    <location>
        <begin position="58"/>
        <end position="68"/>
    </location>
</feature>
<feature type="short sequence motif" description="'KMSKS' region">
    <location>
        <begin position="605"/>
        <end position="609"/>
    </location>
</feature>
<feature type="binding site" evidence="1">
    <location>
        <position position="563"/>
    </location>
    <ligand>
        <name>L-isoleucyl-5'-AMP</name>
        <dbReference type="ChEBI" id="CHEBI:178002"/>
    </ligand>
</feature>
<feature type="binding site" evidence="1">
    <location>
        <position position="608"/>
    </location>
    <ligand>
        <name>ATP</name>
        <dbReference type="ChEBI" id="CHEBI:30616"/>
    </ligand>
</feature>
<feature type="binding site" evidence="1">
    <location>
        <position position="892"/>
    </location>
    <ligand>
        <name>Zn(2+)</name>
        <dbReference type="ChEBI" id="CHEBI:29105"/>
    </ligand>
</feature>
<feature type="binding site" evidence="1">
    <location>
        <position position="895"/>
    </location>
    <ligand>
        <name>Zn(2+)</name>
        <dbReference type="ChEBI" id="CHEBI:29105"/>
    </ligand>
</feature>
<feature type="binding site" evidence="1">
    <location>
        <position position="912"/>
    </location>
    <ligand>
        <name>Zn(2+)</name>
        <dbReference type="ChEBI" id="CHEBI:29105"/>
    </ligand>
</feature>
<feature type="binding site" evidence="1">
    <location>
        <position position="915"/>
    </location>
    <ligand>
        <name>Zn(2+)</name>
        <dbReference type="ChEBI" id="CHEBI:29105"/>
    </ligand>
</feature>
<comment type="function">
    <text evidence="1">Catalyzes the attachment of isoleucine to tRNA(Ile). As IleRS can inadvertently accommodate and process structurally similar amino acids such as valine, to avoid such errors it has two additional distinct tRNA(Ile)-dependent editing activities. One activity is designated as 'pretransfer' editing and involves the hydrolysis of activated Val-AMP. The other activity is designated 'posttransfer' editing and involves deacylation of mischarged Val-tRNA(Ile).</text>
</comment>
<comment type="catalytic activity">
    <reaction evidence="1">
        <text>tRNA(Ile) + L-isoleucine + ATP = L-isoleucyl-tRNA(Ile) + AMP + diphosphate</text>
        <dbReference type="Rhea" id="RHEA:11060"/>
        <dbReference type="Rhea" id="RHEA-COMP:9666"/>
        <dbReference type="Rhea" id="RHEA-COMP:9695"/>
        <dbReference type="ChEBI" id="CHEBI:30616"/>
        <dbReference type="ChEBI" id="CHEBI:33019"/>
        <dbReference type="ChEBI" id="CHEBI:58045"/>
        <dbReference type="ChEBI" id="CHEBI:78442"/>
        <dbReference type="ChEBI" id="CHEBI:78528"/>
        <dbReference type="ChEBI" id="CHEBI:456215"/>
        <dbReference type="EC" id="6.1.1.5"/>
    </reaction>
</comment>
<comment type="cofactor">
    <cofactor evidence="1">
        <name>Zn(2+)</name>
        <dbReference type="ChEBI" id="CHEBI:29105"/>
    </cofactor>
    <text evidence="1">Binds 1 zinc ion per subunit.</text>
</comment>
<comment type="subunit">
    <text evidence="1">Monomer.</text>
</comment>
<comment type="subcellular location">
    <subcellularLocation>
        <location evidence="1">Cytoplasm</location>
    </subcellularLocation>
</comment>
<comment type="domain">
    <text evidence="1">IleRS has two distinct active sites: one for aminoacylation and one for editing. The misactivated valine is translocated from the active site to the editing site, which sterically excludes the correctly activated isoleucine. The single editing site contains two valyl binding pockets, one specific for each substrate (Val-AMP or Val-tRNA(Ile)).</text>
</comment>
<comment type="similarity">
    <text evidence="1">Belongs to the class-I aminoacyl-tRNA synthetase family. IleS type 1 subfamily.</text>
</comment>
<accession>Q9JXY7</accession>